<dbReference type="EC" id="2.1.1.192" evidence="1"/>
<dbReference type="EMBL" id="CP000250">
    <property type="protein sequence ID" value="ABD04805.1"/>
    <property type="molecule type" value="Genomic_DNA"/>
</dbReference>
<dbReference type="RefSeq" id="WP_011438995.1">
    <property type="nucleotide sequence ID" value="NC_007778.1"/>
</dbReference>
<dbReference type="SMR" id="Q2J405"/>
<dbReference type="STRING" id="316058.RPB_0093"/>
<dbReference type="KEGG" id="rpb:RPB_0093"/>
<dbReference type="eggNOG" id="COG0820">
    <property type="taxonomic scope" value="Bacteria"/>
</dbReference>
<dbReference type="HOGENOM" id="CLU_029101_0_0_5"/>
<dbReference type="OrthoDB" id="9793973at2"/>
<dbReference type="Proteomes" id="UP000008809">
    <property type="component" value="Chromosome"/>
</dbReference>
<dbReference type="GO" id="GO:0005737">
    <property type="term" value="C:cytoplasm"/>
    <property type="evidence" value="ECO:0007669"/>
    <property type="project" value="UniProtKB-SubCell"/>
</dbReference>
<dbReference type="GO" id="GO:0051539">
    <property type="term" value="F:4 iron, 4 sulfur cluster binding"/>
    <property type="evidence" value="ECO:0007669"/>
    <property type="project" value="UniProtKB-UniRule"/>
</dbReference>
<dbReference type="GO" id="GO:0046872">
    <property type="term" value="F:metal ion binding"/>
    <property type="evidence" value="ECO:0007669"/>
    <property type="project" value="UniProtKB-KW"/>
</dbReference>
<dbReference type="GO" id="GO:0070040">
    <property type="term" value="F:rRNA (adenine(2503)-C2-)-methyltransferase activity"/>
    <property type="evidence" value="ECO:0007669"/>
    <property type="project" value="UniProtKB-UniRule"/>
</dbReference>
<dbReference type="GO" id="GO:0019843">
    <property type="term" value="F:rRNA binding"/>
    <property type="evidence" value="ECO:0007669"/>
    <property type="project" value="UniProtKB-UniRule"/>
</dbReference>
<dbReference type="GO" id="GO:0002935">
    <property type="term" value="F:tRNA (adenine(37)-C2)-methyltransferase activity"/>
    <property type="evidence" value="ECO:0007669"/>
    <property type="project" value="UniProtKB-UniRule"/>
</dbReference>
<dbReference type="GO" id="GO:0000049">
    <property type="term" value="F:tRNA binding"/>
    <property type="evidence" value="ECO:0007669"/>
    <property type="project" value="UniProtKB-UniRule"/>
</dbReference>
<dbReference type="GO" id="GO:0070475">
    <property type="term" value="P:rRNA base methylation"/>
    <property type="evidence" value="ECO:0007669"/>
    <property type="project" value="UniProtKB-UniRule"/>
</dbReference>
<dbReference type="GO" id="GO:0030488">
    <property type="term" value="P:tRNA methylation"/>
    <property type="evidence" value="ECO:0007669"/>
    <property type="project" value="UniProtKB-UniRule"/>
</dbReference>
<dbReference type="CDD" id="cd01335">
    <property type="entry name" value="Radical_SAM"/>
    <property type="match status" value="1"/>
</dbReference>
<dbReference type="FunFam" id="3.20.20.70:FF:000008">
    <property type="entry name" value="Dual-specificity RNA methyltransferase RlmN"/>
    <property type="match status" value="1"/>
</dbReference>
<dbReference type="Gene3D" id="1.10.150.530">
    <property type="match status" value="1"/>
</dbReference>
<dbReference type="Gene3D" id="3.20.20.70">
    <property type="entry name" value="Aldolase class I"/>
    <property type="match status" value="1"/>
</dbReference>
<dbReference type="HAMAP" id="MF_01849">
    <property type="entry name" value="RNA_methyltr_RlmN"/>
    <property type="match status" value="1"/>
</dbReference>
<dbReference type="InterPro" id="IPR013785">
    <property type="entry name" value="Aldolase_TIM"/>
</dbReference>
<dbReference type="InterPro" id="IPR006638">
    <property type="entry name" value="Elp3/MiaA/NifB-like_rSAM"/>
</dbReference>
<dbReference type="InterPro" id="IPR040072">
    <property type="entry name" value="Methyltransferase_A"/>
</dbReference>
<dbReference type="InterPro" id="IPR048641">
    <property type="entry name" value="RlmN_N"/>
</dbReference>
<dbReference type="InterPro" id="IPR027492">
    <property type="entry name" value="RNA_MTrfase_RlmN"/>
</dbReference>
<dbReference type="InterPro" id="IPR004383">
    <property type="entry name" value="rRNA_lsu_MTrfase_RlmN/Cfr"/>
</dbReference>
<dbReference type="InterPro" id="IPR007197">
    <property type="entry name" value="rSAM"/>
</dbReference>
<dbReference type="NCBIfam" id="TIGR00048">
    <property type="entry name" value="rRNA_mod_RlmN"/>
    <property type="match status" value="1"/>
</dbReference>
<dbReference type="PANTHER" id="PTHR30544">
    <property type="entry name" value="23S RRNA METHYLTRANSFERASE"/>
    <property type="match status" value="1"/>
</dbReference>
<dbReference type="PANTHER" id="PTHR30544:SF5">
    <property type="entry name" value="RADICAL SAM CORE DOMAIN-CONTAINING PROTEIN"/>
    <property type="match status" value="1"/>
</dbReference>
<dbReference type="Pfam" id="PF04055">
    <property type="entry name" value="Radical_SAM"/>
    <property type="match status" value="1"/>
</dbReference>
<dbReference type="Pfam" id="PF21016">
    <property type="entry name" value="RlmN_N"/>
    <property type="match status" value="1"/>
</dbReference>
<dbReference type="PIRSF" id="PIRSF006004">
    <property type="entry name" value="CHP00048"/>
    <property type="match status" value="1"/>
</dbReference>
<dbReference type="SFLD" id="SFLDF00275">
    <property type="entry name" value="adenosine_C2_methyltransferase"/>
    <property type="match status" value="1"/>
</dbReference>
<dbReference type="SFLD" id="SFLDG01062">
    <property type="entry name" value="methyltransferase_(Class_A)"/>
    <property type="match status" value="1"/>
</dbReference>
<dbReference type="SMART" id="SM00729">
    <property type="entry name" value="Elp3"/>
    <property type="match status" value="1"/>
</dbReference>
<dbReference type="SUPFAM" id="SSF102114">
    <property type="entry name" value="Radical SAM enzymes"/>
    <property type="match status" value="1"/>
</dbReference>
<dbReference type="PROSITE" id="PS51918">
    <property type="entry name" value="RADICAL_SAM"/>
    <property type="match status" value="1"/>
</dbReference>
<reference key="1">
    <citation type="submission" date="2006-01" db="EMBL/GenBank/DDBJ databases">
        <title>Complete sequence of Rhodopseudomonas palustris HaA2.</title>
        <authorList>
            <consortium name="US DOE Joint Genome Institute"/>
            <person name="Copeland A."/>
            <person name="Lucas S."/>
            <person name="Lapidus A."/>
            <person name="Barry K."/>
            <person name="Detter J.C."/>
            <person name="Glavina T."/>
            <person name="Hammon N."/>
            <person name="Israni S."/>
            <person name="Pitluck S."/>
            <person name="Chain P."/>
            <person name="Malfatti S."/>
            <person name="Shin M."/>
            <person name="Vergez L."/>
            <person name="Schmutz J."/>
            <person name="Larimer F."/>
            <person name="Land M."/>
            <person name="Hauser L."/>
            <person name="Pelletier D.A."/>
            <person name="Kyrpides N."/>
            <person name="Anderson I."/>
            <person name="Oda Y."/>
            <person name="Harwood C.S."/>
            <person name="Richardson P."/>
        </authorList>
    </citation>
    <scope>NUCLEOTIDE SEQUENCE [LARGE SCALE GENOMIC DNA]</scope>
    <source>
        <strain>HaA2</strain>
    </source>
</reference>
<sequence length="399" mass="44428">MTLAVAVAPLEKTPLETYVPPAKPSLIGLSRAELAERLGAIGVAPAQRKMRAQQLWHWMYVRGARDFAEMTNVSKEMRATLAEHCTVDRPEVVAEQISADGTRKWLLRLPSGDDVQKAHEVECVYIPETDRGTLCVSSQVGCTLNCSFCHTGTQRLVRNLTAGEIVGQVMVARDRLGDWIDRETPNGNRLVTNVVMMGMGEPLYNFEAVRDALLIVTDNEGIGISRRRVTLSTSGVVPNIARTGDEIGVMLAISLHAVRDELRDELVPLNRKYPLKELLQACRDYPGASNARRITFEYVMLKGVNDSLDDARRLVQLLKGIPAKINLIPFNPWPGSKYECSDWDQIEKFSEYVFNAGYSSPVRTPRGRDILAACGQLKSETEKLSVRERDALRAMAMTD</sequence>
<keyword id="KW-0004">4Fe-4S</keyword>
<keyword id="KW-0963">Cytoplasm</keyword>
<keyword id="KW-1015">Disulfide bond</keyword>
<keyword id="KW-0408">Iron</keyword>
<keyword id="KW-0411">Iron-sulfur</keyword>
<keyword id="KW-0479">Metal-binding</keyword>
<keyword id="KW-0489">Methyltransferase</keyword>
<keyword id="KW-1185">Reference proteome</keyword>
<keyword id="KW-0698">rRNA processing</keyword>
<keyword id="KW-0949">S-adenosyl-L-methionine</keyword>
<keyword id="KW-0808">Transferase</keyword>
<keyword id="KW-0819">tRNA processing</keyword>
<protein>
    <recommendedName>
        <fullName evidence="1">Dual-specificity RNA methyltransferase RlmN</fullName>
        <ecNumber evidence="1">2.1.1.192</ecNumber>
    </recommendedName>
    <alternativeName>
        <fullName evidence="1">23S rRNA (adenine(2503)-C(2))-methyltransferase</fullName>
    </alternativeName>
    <alternativeName>
        <fullName evidence="1">23S rRNA m2A2503 methyltransferase</fullName>
    </alternativeName>
    <alternativeName>
        <fullName evidence="1">Ribosomal RNA large subunit methyltransferase N</fullName>
    </alternativeName>
    <alternativeName>
        <fullName evidence="1">tRNA (adenine(37)-C(2))-methyltransferase</fullName>
    </alternativeName>
    <alternativeName>
        <fullName evidence="1">tRNA m2A37 methyltransferase</fullName>
    </alternativeName>
</protein>
<name>RLMN_RHOP2</name>
<organism>
    <name type="scientific">Rhodopseudomonas palustris (strain HaA2)</name>
    <dbReference type="NCBI Taxonomy" id="316058"/>
    <lineage>
        <taxon>Bacteria</taxon>
        <taxon>Pseudomonadati</taxon>
        <taxon>Pseudomonadota</taxon>
        <taxon>Alphaproteobacteria</taxon>
        <taxon>Hyphomicrobiales</taxon>
        <taxon>Nitrobacteraceae</taxon>
        <taxon>Rhodopseudomonas</taxon>
    </lineage>
</organism>
<gene>
    <name evidence="1" type="primary">rlmN</name>
    <name type="ordered locus">RPB_0093</name>
</gene>
<accession>Q2J405</accession>
<proteinExistence type="inferred from homology"/>
<evidence type="ECO:0000255" key="1">
    <source>
        <dbReference type="HAMAP-Rule" id="MF_01849"/>
    </source>
</evidence>
<evidence type="ECO:0000255" key="2">
    <source>
        <dbReference type="PROSITE-ProRule" id="PRU01266"/>
    </source>
</evidence>
<comment type="function">
    <text evidence="1">Specifically methylates position 2 of adenine 2503 in 23S rRNA and position 2 of adenine 37 in tRNAs. m2A2503 modification seems to play a crucial role in the proofreading step occurring at the peptidyl transferase center and thus would serve to optimize ribosomal fidelity.</text>
</comment>
<comment type="catalytic activity">
    <reaction evidence="1">
        <text>adenosine(2503) in 23S rRNA + 2 reduced [2Fe-2S]-[ferredoxin] + 2 S-adenosyl-L-methionine = 2-methyladenosine(2503) in 23S rRNA + 5'-deoxyadenosine + L-methionine + 2 oxidized [2Fe-2S]-[ferredoxin] + S-adenosyl-L-homocysteine</text>
        <dbReference type="Rhea" id="RHEA:42916"/>
        <dbReference type="Rhea" id="RHEA-COMP:10000"/>
        <dbReference type="Rhea" id="RHEA-COMP:10001"/>
        <dbReference type="Rhea" id="RHEA-COMP:10152"/>
        <dbReference type="Rhea" id="RHEA-COMP:10282"/>
        <dbReference type="ChEBI" id="CHEBI:17319"/>
        <dbReference type="ChEBI" id="CHEBI:33737"/>
        <dbReference type="ChEBI" id="CHEBI:33738"/>
        <dbReference type="ChEBI" id="CHEBI:57844"/>
        <dbReference type="ChEBI" id="CHEBI:57856"/>
        <dbReference type="ChEBI" id="CHEBI:59789"/>
        <dbReference type="ChEBI" id="CHEBI:74411"/>
        <dbReference type="ChEBI" id="CHEBI:74497"/>
        <dbReference type="EC" id="2.1.1.192"/>
    </reaction>
</comment>
<comment type="catalytic activity">
    <reaction evidence="1">
        <text>adenosine(37) in tRNA + 2 reduced [2Fe-2S]-[ferredoxin] + 2 S-adenosyl-L-methionine = 2-methyladenosine(37) in tRNA + 5'-deoxyadenosine + L-methionine + 2 oxidized [2Fe-2S]-[ferredoxin] + S-adenosyl-L-homocysteine</text>
        <dbReference type="Rhea" id="RHEA:43332"/>
        <dbReference type="Rhea" id="RHEA-COMP:10000"/>
        <dbReference type="Rhea" id="RHEA-COMP:10001"/>
        <dbReference type="Rhea" id="RHEA-COMP:10162"/>
        <dbReference type="Rhea" id="RHEA-COMP:10485"/>
        <dbReference type="ChEBI" id="CHEBI:17319"/>
        <dbReference type="ChEBI" id="CHEBI:33737"/>
        <dbReference type="ChEBI" id="CHEBI:33738"/>
        <dbReference type="ChEBI" id="CHEBI:57844"/>
        <dbReference type="ChEBI" id="CHEBI:57856"/>
        <dbReference type="ChEBI" id="CHEBI:59789"/>
        <dbReference type="ChEBI" id="CHEBI:74411"/>
        <dbReference type="ChEBI" id="CHEBI:74497"/>
        <dbReference type="EC" id="2.1.1.192"/>
    </reaction>
</comment>
<comment type="cofactor">
    <cofactor evidence="1">
        <name>[4Fe-4S] cluster</name>
        <dbReference type="ChEBI" id="CHEBI:49883"/>
    </cofactor>
    <text evidence="1">Binds 1 [4Fe-4S] cluster. The cluster is coordinated with 3 cysteines and an exchangeable S-adenosyl-L-methionine.</text>
</comment>
<comment type="subcellular location">
    <subcellularLocation>
        <location evidence="1">Cytoplasm</location>
    </subcellularLocation>
</comment>
<comment type="miscellaneous">
    <text evidence="1">Reaction proceeds by a ping-pong mechanism involving intermediate methylation of a conserved cysteine residue.</text>
</comment>
<comment type="similarity">
    <text evidence="1">Belongs to the radical SAM superfamily. RlmN family.</text>
</comment>
<feature type="chain" id="PRO_0000350373" description="Dual-specificity RNA methyltransferase RlmN">
    <location>
        <begin position="1"/>
        <end position="399"/>
    </location>
</feature>
<feature type="domain" description="Radical SAM core" evidence="2">
    <location>
        <begin position="128"/>
        <end position="371"/>
    </location>
</feature>
<feature type="active site" description="Proton acceptor" evidence="1">
    <location>
        <position position="122"/>
    </location>
</feature>
<feature type="active site" description="S-methylcysteine intermediate" evidence="1">
    <location>
        <position position="374"/>
    </location>
</feature>
<feature type="binding site" evidence="1">
    <location>
        <position position="142"/>
    </location>
    <ligand>
        <name>[4Fe-4S] cluster</name>
        <dbReference type="ChEBI" id="CHEBI:49883"/>
        <note>4Fe-4S-S-AdoMet</note>
    </ligand>
</feature>
<feature type="binding site" evidence="1">
    <location>
        <position position="146"/>
    </location>
    <ligand>
        <name>[4Fe-4S] cluster</name>
        <dbReference type="ChEBI" id="CHEBI:49883"/>
        <note>4Fe-4S-S-AdoMet</note>
    </ligand>
</feature>
<feature type="binding site" evidence="1">
    <location>
        <position position="149"/>
    </location>
    <ligand>
        <name>[4Fe-4S] cluster</name>
        <dbReference type="ChEBI" id="CHEBI:49883"/>
        <note>4Fe-4S-S-AdoMet</note>
    </ligand>
</feature>
<feature type="binding site" evidence="1">
    <location>
        <begin position="200"/>
        <end position="201"/>
    </location>
    <ligand>
        <name>S-adenosyl-L-methionine</name>
        <dbReference type="ChEBI" id="CHEBI:59789"/>
    </ligand>
</feature>
<feature type="binding site" evidence="1">
    <location>
        <position position="232"/>
    </location>
    <ligand>
        <name>S-adenosyl-L-methionine</name>
        <dbReference type="ChEBI" id="CHEBI:59789"/>
    </ligand>
</feature>
<feature type="binding site" evidence="1">
    <location>
        <begin position="254"/>
        <end position="256"/>
    </location>
    <ligand>
        <name>S-adenosyl-L-methionine</name>
        <dbReference type="ChEBI" id="CHEBI:59789"/>
    </ligand>
</feature>
<feature type="binding site" evidence="1">
    <location>
        <position position="331"/>
    </location>
    <ligand>
        <name>S-adenosyl-L-methionine</name>
        <dbReference type="ChEBI" id="CHEBI:59789"/>
    </ligand>
</feature>
<feature type="disulfide bond" description="(transient)" evidence="1">
    <location>
        <begin position="135"/>
        <end position="374"/>
    </location>
</feature>